<name>MURG_SALRD</name>
<evidence type="ECO:0000255" key="1">
    <source>
        <dbReference type="HAMAP-Rule" id="MF_00033"/>
    </source>
</evidence>
<accession>Q2S528</accession>
<sequence length="370" mass="39623">MSTRAPHILMVGGGTGGHVYPAIAIADAVRALRPDAQIVFAGTQDRLEARAVPEAGYALHPITAQGLQRRAVASNLLLPFRVAQGLVQSWRLVGAIEPDVAVGTGGYVAAPVLMAAWLRGRPLLIQEQNAYAGLTNRVLARLALRIHLAFPEAKDWVPAEHAVVSGNPTRQSLRDADPDAARAAFNVPEDGRVLLVMGGSLGSAAINGAIQRILDPLLAEGDVHVVWQTGTRYYDDLTEDLDEHPRLRVVEYIDQMGHAYAAADLAVCRAGALTCSELTVTGTPAVLVPSPNVTADHQTKNARSLERAGAAVWLDEADLDAHLETVLLDLLGNSDRRARMAEAARDRARPDAAETIARDVLALADRYRTN</sequence>
<comment type="function">
    <text evidence="1">Cell wall formation. Catalyzes the transfer of a GlcNAc subunit on undecaprenyl-pyrophosphoryl-MurNAc-pentapeptide (lipid intermediate I) to form undecaprenyl-pyrophosphoryl-MurNAc-(pentapeptide)GlcNAc (lipid intermediate II).</text>
</comment>
<comment type="catalytic activity">
    <reaction evidence="1">
        <text>di-trans,octa-cis-undecaprenyl diphospho-N-acetyl-alpha-D-muramoyl-L-alanyl-D-glutamyl-meso-2,6-diaminopimeloyl-D-alanyl-D-alanine + UDP-N-acetyl-alpha-D-glucosamine = di-trans,octa-cis-undecaprenyl diphospho-[N-acetyl-alpha-D-glucosaminyl-(1-&gt;4)]-N-acetyl-alpha-D-muramoyl-L-alanyl-D-glutamyl-meso-2,6-diaminopimeloyl-D-alanyl-D-alanine + UDP + H(+)</text>
        <dbReference type="Rhea" id="RHEA:31227"/>
        <dbReference type="ChEBI" id="CHEBI:15378"/>
        <dbReference type="ChEBI" id="CHEBI:57705"/>
        <dbReference type="ChEBI" id="CHEBI:58223"/>
        <dbReference type="ChEBI" id="CHEBI:61387"/>
        <dbReference type="ChEBI" id="CHEBI:61388"/>
        <dbReference type="EC" id="2.4.1.227"/>
    </reaction>
</comment>
<comment type="pathway">
    <text evidence="1">Cell wall biogenesis; peptidoglycan biosynthesis.</text>
</comment>
<comment type="subcellular location">
    <subcellularLocation>
        <location evidence="1">Cell inner membrane</location>
        <topology evidence="1">Peripheral membrane protein</topology>
        <orientation evidence="1">Cytoplasmic side</orientation>
    </subcellularLocation>
</comment>
<comment type="similarity">
    <text evidence="1">Belongs to the glycosyltransferase 28 family. MurG subfamily.</text>
</comment>
<organism>
    <name type="scientific">Salinibacter ruber (strain DSM 13855 / M31)</name>
    <dbReference type="NCBI Taxonomy" id="309807"/>
    <lineage>
        <taxon>Bacteria</taxon>
        <taxon>Pseudomonadati</taxon>
        <taxon>Rhodothermota</taxon>
        <taxon>Rhodothermia</taxon>
        <taxon>Rhodothermales</taxon>
        <taxon>Salinibacteraceae</taxon>
        <taxon>Salinibacter</taxon>
    </lineage>
</organism>
<feature type="chain" id="PRO_0000315164" description="UDP-N-acetylglucosamine--N-acetylmuramyl-(pentapeptide) pyrophosphoryl-undecaprenol N-acetylglucosamine transferase">
    <location>
        <begin position="1"/>
        <end position="370"/>
    </location>
</feature>
<feature type="binding site" evidence="1">
    <location>
        <begin position="15"/>
        <end position="17"/>
    </location>
    <ligand>
        <name>UDP-N-acetyl-alpha-D-glucosamine</name>
        <dbReference type="ChEBI" id="CHEBI:57705"/>
    </ligand>
</feature>
<feature type="binding site" evidence="1">
    <location>
        <position position="129"/>
    </location>
    <ligand>
        <name>UDP-N-acetyl-alpha-D-glucosamine</name>
        <dbReference type="ChEBI" id="CHEBI:57705"/>
    </ligand>
</feature>
<feature type="binding site" evidence="1">
    <location>
        <position position="170"/>
    </location>
    <ligand>
        <name>UDP-N-acetyl-alpha-D-glucosamine</name>
        <dbReference type="ChEBI" id="CHEBI:57705"/>
    </ligand>
</feature>
<feature type="binding site" evidence="1">
    <location>
        <position position="200"/>
    </location>
    <ligand>
        <name>UDP-N-acetyl-alpha-D-glucosamine</name>
        <dbReference type="ChEBI" id="CHEBI:57705"/>
    </ligand>
</feature>
<feature type="binding site" evidence="1">
    <location>
        <position position="253"/>
    </location>
    <ligand>
        <name>UDP-N-acetyl-alpha-D-glucosamine</name>
        <dbReference type="ChEBI" id="CHEBI:57705"/>
    </ligand>
</feature>
<feature type="binding site" evidence="1">
    <location>
        <position position="298"/>
    </location>
    <ligand>
        <name>UDP-N-acetyl-alpha-D-glucosamine</name>
        <dbReference type="ChEBI" id="CHEBI:57705"/>
    </ligand>
</feature>
<protein>
    <recommendedName>
        <fullName evidence="1">UDP-N-acetylglucosamine--N-acetylmuramyl-(pentapeptide) pyrophosphoryl-undecaprenol N-acetylglucosamine transferase</fullName>
        <ecNumber evidence="1">2.4.1.227</ecNumber>
    </recommendedName>
    <alternativeName>
        <fullName evidence="1">Undecaprenyl-PP-MurNAc-pentapeptide-UDPGlcNAc GlcNAc transferase</fullName>
    </alternativeName>
</protein>
<keyword id="KW-0131">Cell cycle</keyword>
<keyword id="KW-0132">Cell division</keyword>
<keyword id="KW-0997">Cell inner membrane</keyword>
<keyword id="KW-1003">Cell membrane</keyword>
<keyword id="KW-0133">Cell shape</keyword>
<keyword id="KW-0961">Cell wall biogenesis/degradation</keyword>
<keyword id="KW-0328">Glycosyltransferase</keyword>
<keyword id="KW-0472">Membrane</keyword>
<keyword id="KW-0573">Peptidoglycan synthesis</keyword>
<keyword id="KW-1185">Reference proteome</keyword>
<keyword id="KW-0808">Transferase</keyword>
<gene>
    <name evidence="1" type="primary">murG</name>
    <name type="ordered locus">SRU_0560</name>
</gene>
<dbReference type="EC" id="2.4.1.227" evidence="1"/>
<dbReference type="EMBL" id="CP000159">
    <property type="protein sequence ID" value="ABC46252.1"/>
    <property type="molecule type" value="Genomic_DNA"/>
</dbReference>
<dbReference type="RefSeq" id="WP_011403336.1">
    <property type="nucleotide sequence ID" value="NC_007677.1"/>
</dbReference>
<dbReference type="RefSeq" id="YP_444703.1">
    <property type="nucleotide sequence ID" value="NC_007677.1"/>
</dbReference>
<dbReference type="SMR" id="Q2S528"/>
<dbReference type="STRING" id="309807.SRU_0560"/>
<dbReference type="CAZy" id="GT28">
    <property type="family name" value="Glycosyltransferase Family 28"/>
</dbReference>
<dbReference type="EnsemblBacteria" id="ABC46252">
    <property type="protein sequence ID" value="ABC46252"/>
    <property type="gene ID" value="SRU_0560"/>
</dbReference>
<dbReference type="KEGG" id="sru:SRU_0560"/>
<dbReference type="PATRIC" id="fig|309807.25.peg.582"/>
<dbReference type="eggNOG" id="COG0707">
    <property type="taxonomic scope" value="Bacteria"/>
</dbReference>
<dbReference type="HOGENOM" id="CLU_037404_0_1_10"/>
<dbReference type="OrthoDB" id="9808936at2"/>
<dbReference type="UniPathway" id="UPA00219"/>
<dbReference type="Proteomes" id="UP000008674">
    <property type="component" value="Chromosome"/>
</dbReference>
<dbReference type="GO" id="GO:0005886">
    <property type="term" value="C:plasma membrane"/>
    <property type="evidence" value="ECO:0007669"/>
    <property type="project" value="UniProtKB-SubCell"/>
</dbReference>
<dbReference type="GO" id="GO:0051991">
    <property type="term" value="F:UDP-N-acetyl-D-glucosamine:N-acetylmuramoyl-L-alanyl-D-glutamyl-meso-2,6-diaminopimelyl-D-alanyl-D-alanine-diphosphoundecaprenol 4-beta-N-acetylglucosaminlytransferase activity"/>
    <property type="evidence" value="ECO:0007669"/>
    <property type="project" value="RHEA"/>
</dbReference>
<dbReference type="GO" id="GO:0050511">
    <property type="term" value="F:undecaprenyldiphospho-muramoylpentapeptide beta-N-acetylglucosaminyltransferase activity"/>
    <property type="evidence" value="ECO:0007669"/>
    <property type="project" value="UniProtKB-UniRule"/>
</dbReference>
<dbReference type="GO" id="GO:0005975">
    <property type="term" value="P:carbohydrate metabolic process"/>
    <property type="evidence" value="ECO:0007669"/>
    <property type="project" value="InterPro"/>
</dbReference>
<dbReference type="GO" id="GO:0051301">
    <property type="term" value="P:cell division"/>
    <property type="evidence" value="ECO:0007669"/>
    <property type="project" value="UniProtKB-KW"/>
</dbReference>
<dbReference type="GO" id="GO:0071555">
    <property type="term" value="P:cell wall organization"/>
    <property type="evidence" value="ECO:0007669"/>
    <property type="project" value="UniProtKB-KW"/>
</dbReference>
<dbReference type="GO" id="GO:0030259">
    <property type="term" value="P:lipid glycosylation"/>
    <property type="evidence" value="ECO:0007669"/>
    <property type="project" value="UniProtKB-UniRule"/>
</dbReference>
<dbReference type="GO" id="GO:0009252">
    <property type="term" value="P:peptidoglycan biosynthetic process"/>
    <property type="evidence" value="ECO:0007669"/>
    <property type="project" value="UniProtKB-UniRule"/>
</dbReference>
<dbReference type="GO" id="GO:0008360">
    <property type="term" value="P:regulation of cell shape"/>
    <property type="evidence" value="ECO:0007669"/>
    <property type="project" value="UniProtKB-KW"/>
</dbReference>
<dbReference type="CDD" id="cd03785">
    <property type="entry name" value="GT28_MurG"/>
    <property type="match status" value="1"/>
</dbReference>
<dbReference type="Gene3D" id="3.40.50.2000">
    <property type="entry name" value="Glycogen Phosphorylase B"/>
    <property type="match status" value="2"/>
</dbReference>
<dbReference type="HAMAP" id="MF_00033">
    <property type="entry name" value="MurG"/>
    <property type="match status" value="1"/>
</dbReference>
<dbReference type="InterPro" id="IPR006009">
    <property type="entry name" value="GlcNAc_MurG"/>
</dbReference>
<dbReference type="InterPro" id="IPR007235">
    <property type="entry name" value="Glyco_trans_28_C"/>
</dbReference>
<dbReference type="InterPro" id="IPR004276">
    <property type="entry name" value="GlycoTrans_28_N"/>
</dbReference>
<dbReference type="NCBIfam" id="TIGR01133">
    <property type="entry name" value="murG"/>
    <property type="match status" value="1"/>
</dbReference>
<dbReference type="PANTHER" id="PTHR21015:SF22">
    <property type="entry name" value="GLYCOSYLTRANSFERASE"/>
    <property type="match status" value="1"/>
</dbReference>
<dbReference type="PANTHER" id="PTHR21015">
    <property type="entry name" value="UDP-N-ACETYLGLUCOSAMINE--N-ACETYLMURAMYL-(PENTAPEPTIDE) PYROPHOSPHORYL-UNDECAPRENOL N-ACETYLGLUCOSAMINE TRANSFERASE 1"/>
    <property type="match status" value="1"/>
</dbReference>
<dbReference type="Pfam" id="PF04101">
    <property type="entry name" value="Glyco_tran_28_C"/>
    <property type="match status" value="1"/>
</dbReference>
<dbReference type="Pfam" id="PF03033">
    <property type="entry name" value="Glyco_transf_28"/>
    <property type="match status" value="1"/>
</dbReference>
<dbReference type="SUPFAM" id="SSF53756">
    <property type="entry name" value="UDP-Glycosyltransferase/glycogen phosphorylase"/>
    <property type="match status" value="1"/>
</dbReference>
<reference key="1">
    <citation type="journal article" date="2005" name="Proc. Natl. Acad. Sci. U.S.A.">
        <title>The genome of Salinibacter ruber: convergence and gene exchange among hyperhalophilic bacteria and archaea.</title>
        <authorList>
            <person name="Mongodin E.F."/>
            <person name="Nelson K.E."/>
            <person name="Daugherty S."/>
            <person name="DeBoy R.T."/>
            <person name="Wister J."/>
            <person name="Khouri H."/>
            <person name="Weidman J."/>
            <person name="Walsh D.A."/>
            <person name="Papke R.T."/>
            <person name="Sanchez Perez G."/>
            <person name="Sharma A.K."/>
            <person name="Nesbo C.L."/>
            <person name="MacLeod D."/>
            <person name="Bapteste E."/>
            <person name="Doolittle W.F."/>
            <person name="Charlebois R.L."/>
            <person name="Legault B."/>
            <person name="Rodriguez-Valera F."/>
        </authorList>
    </citation>
    <scope>NUCLEOTIDE SEQUENCE [LARGE SCALE GENOMIC DNA]</scope>
    <source>
        <strain>DSM 13855 / CECT 5946 / M31</strain>
    </source>
</reference>
<proteinExistence type="inferred from homology"/>